<protein>
    <recommendedName>
        <fullName evidence="1">Succinate dehydrogenase assembly factor 2, mitochondrial</fullName>
        <shortName evidence="1">SDH assembly factor 2</shortName>
        <shortName evidence="1">SDHAF2</shortName>
    </recommendedName>
</protein>
<reference key="1">
    <citation type="journal article" date="2007" name="Nat. Biotechnol.">
        <title>Genome sequence of the lignocellulose-bioconverting and xylose-fermenting yeast Pichia stipitis.</title>
        <authorList>
            <person name="Jeffries T.W."/>
            <person name="Grigoriev I.V."/>
            <person name="Grimwood J."/>
            <person name="Laplaza J.M."/>
            <person name="Aerts A."/>
            <person name="Salamov A."/>
            <person name="Schmutz J."/>
            <person name="Lindquist E."/>
            <person name="Dehal P."/>
            <person name="Shapiro H."/>
            <person name="Jin Y.-S."/>
            <person name="Passoth V."/>
            <person name="Richardson P.M."/>
        </authorList>
    </citation>
    <scope>NUCLEOTIDE SEQUENCE [LARGE SCALE GENOMIC DNA]</scope>
    <source>
        <strain>ATCC 58785 / CBS 6054 / NBRC 10063 / NRRL Y-11545</strain>
    </source>
</reference>
<evidence type="ECO:0000255" key="1">
    <source>
        <dbReference type="HAMAP-Rule" id="MF_03057"/>
    </source>
</evidence>
<proteinExistence type="inferred from homology"/>
<gene>
    <name type="ORF">PICST_53561</name>
</gene>
<dbReference type="EMBL" id="AAVQ01000002">
    <property type="protein sequence ID" value="EAZ63101.2"/>
    <property type="molecule type" value="Genomic_DNA"/>
</dbReference>
<dbReference type="RefSeq" id="XP_001387124.2">
    <property type="nucleotide sequence ID" value="XM_001387087.1"/>
</dbReference>
<dbReference type="SMR" id="A3GHR8"/>
<dbReference type="FunCoup" id="A3GHR8">
    <property type="interactions" value="335"/>
</dbReference>
<dbReference type="STRING" id="322104.A3GHR8"/>
<dbReference type="GeneID" id="4851817"/>
<dbReference type="KEGG" id="pic:PICST_53561"/>
<dbReference type="eggNOG" id="KOG3326">
    <property type="taxonomic scope" value="Eukaryota"/>
</dbReference>
<dbReference type="HOGENOM" id="CLU_103054_0_1_1"/>
<dbReference type="InParanoid" id="A3GHR8"/>
<dbReference type="OMA" id="YGKPQNP"/>
<dbReference type="OrthoDB" id="284292at2759"/>
<dbReference type="Proteomes" id="UP000002258">
    <property type="component" value="Chromosome 1"/>
</dbReference>
<dbReference type="GO" id="GO:0005759">
    <property type="term" value="C:mitochondrial matrix"/>
    <property type="evidence" value="ECO:0000250"/>
    <property type="project" value="UniProtKB"/>
</dbReference>
<dbReference type="GO" id="GO:0006121">
    <property type="term" value="P:mitochondrial electron transport, succinate to ubiquinone"/>
    <property type="evidence" value="ECO:0000250"/>
    <property type="project" value="UniProtKB"/>
</dbReference>
<dbReference type="GO" id="GO:0034553">
    <property type="term" value="P:mitochondrial respiratory chain complex II assembly"/>
    <property type="evidence" value="ECO:0007669"/>
    <property type="project" value="TreeGrafter"/>
</dbReference>
<dbReference type="GO" id="GO:0018293">
    <property type="term" value="P:protein-FAD linkage"/>
    <property type="evidence" value="ECO:0000250"/>
    <property type="project" value="UniProtKB"/>
</dbReference>
<dbReference type="GO" id="GO:0006099">
    <property type="term" value="P:tricarboxylic acid cycle"/>
    <property type="evidence" value="ECO:0007669"/>
    <property type="project" value="TreeGrafter"/>
</dbReference>
<dbReference type="FunFam" id="1.10.150.250:FF:000002">
    <property type="entry name" value="Succinate dehydrogenase assembly factor 2, mitochondrial"/>
    <property type="match status" value="1"/>
</dbReference>
<dbReference type="Gene3D" id="1.10.150.250">
    <property type="entry name" value="Flavinator of succinate dehydrogenase"/>
    <property type="match status" value="1"/>
</dbReference>
<dbReference type="HAMAP" id="MF_03057">
    <property type="entry name" value="SDHAF2"/>
    <property type="match status" value="1"/>
</dbReference>
<dbReference type="InterPro" id="IPR005631">
    <property type="entry name" value="SDH"/>
</dbReference>
<dbReference type="InterPro" id="IPR036714">
    <property type="entry name" value="SDH_sf"/>
</dbReference>
<dbReference type="InterPro" id="IPR028882">
    <property type="entry name" value="SDHAF2"/>
</dbReference>
<dbReference type="PANTHER" id="PTHR12469">
    <property type="entry name" value="PROTEIN EMI5 HOMOLOG, MITOCHONDRIAL"/>
    <property type="match status" value="1"/>
</dbReference>
<dbReference type="PANTHER" id="PTHR12469:SF2">
    <property type="entry name" value="SUCCINATE DEHYDROGENASE ASSEMBLY FACTOR 2, MITOCHONDRIAL"/>
    <property type="match status" value="1"/>
</dbReference>
<dbReference type="Pfam" id="PF03937">
    <property type="entry name" value="Sdh5"/>
    <property type="match status" value="1"/>
</dbReference>
<dbReference type="SUPFAM" id="SSF109910">
    <property type="entry name" value="YgfY-like"/>
    <property type="match status" value="1"/>
</dbReference>
<comment type="function">
    <text evidence="1">Plays an essential role in the assembly of succinate dehydrogenase (SDH), an enzyme complex (also referred to as respiratory complex II) that is a component of both the tricarboxylic acid (TCA) cycle and the mitochondrial electron transport chain, and which couples the oxidation of succinate to fumarate with the reduction of ubiquinone (coenzyme Q) to ubiquinol. Required for flavinylation (covalent attachment of FAD) of the flavoprotein subunit of the SDH catalytic dimer.</text>
</comment>
<comment type="subunit">
    <text evidence="1">Interacts with the flavoprotein subunit within the SDH catalytic dimer.</text>
</comment>
<comment type="subcellular location">
    <subcellularLocation>
        <location evidence="1">Mitochondrion matrix</location>
    </subcellularLocation>
</comment>
<comment type="miscellaneous">
    <text evidence="1">This protein may be expected to contain an N-terminal transit peptide but none has been predicted.</text>
</comment>
<comment type="similarity">
    <text evidence="1">Belongs to the SDHAF2 family.</text>
</comment>
<feature type="chain" id="PRO_0000383198" description="Succinate dehydrogenase assembly factor 2, mitochondrial">
    <location>
        <begin position="1"/>
        <end position="149"/>
    </location>
</feature>
<sequence>MLRNRITSRRSISSSVSALANYGKPQNPAIDTTVKMRIQPIKREGETMEIKRARLIYQSRKRGILESDLLLSRFAKKYLNEFTEAELDEYDRLLDEPDWDIYYWATKNYDVTPLPDKWKDSKILKMLQEDAKNDDREILRMPELDLEQK</sequence>
<name>SDHF2_PICST</name>
<accession>A3GHR8</accession>
<keyword id="KW-0143">Chaperone</keyword>
<keyword id="KW-0496">Mitochondrion</keyword>
<keyword id="KW-1185">Reference proteome</keyword>
<organism>
    <name type="scientific">Scheffersomyces stipitis (strain ATCC 58785 / CBS 6054 / NBRC 10063 / NRRL Y-11545)</name>
    <name type="common">Yeast</name>
    <name type="synonym">Pichia stipitis</name>
    <dbReference type="NCBI Taxonomy" id="322104"/>
    <lineage>
        <taxon>Eukaryota</taxon>
        <taxon>Fungi</taxon>
        <taxon>Dikarya</taxon>
        <taxon>Ascomycota</taxon>
        <taxon>Saccharomycotina</taxon>
        <taxon>Pichiomycetes</taxon>
        <taxon>Debaryomycetaceae</taxon>
        <taxon>Scheffersomyces</taxon>
    </lineage>
</organism>